<gene>
    <name type="primary">med22</name>
    <name type="synonym">surf5</name>
    <name type="ORF">si:ch73-278c20.1</name>
    <name type="ORF">si:dkey-226m8.2</name>
</gene>
<accession>A5WUL3</accession>
<accession>Q6IQK8</accession>
<sequence length="198" mass="22681">MSTPRVLPQSKETLLQNYNKRLKDDIRSILDNFTEIIKTAKVEDETQVSRATQAEQDHFEMHVRAANIVRAGESLMKLVSDLKQFLILNDFPSVNEAISLRNQQLRTLQEECDKKLISLRDEIAIDLYELEEEYYSSSCGQWDGVELPLCEAFHRQDSWGSPEMTSDPSHANHEVSDHLGSQESMQRHRNGSGTSEQS</sequence>
<proteinExistence type="evidence at transcript level"/>
<protein>
    <recommendedName>
        <fullName>Mediator of RNA polymerase II transcription subunit 22</fullName>
    </recommendedName>
    <alternativeName>
        <fullName>Mediator complex subunit 22</fullName>
    </alternativeName>
    <alternativeName>
        <fullName>Surfeit locus protein 5</fullName>
    </alternativeName>
</protein>
<keyword id="KW-0010">Activator</keyword>
<keyword id="KW-0025">Alternative splicing</keyword>
<keyword id="KW-0539">Nucleus</keyword>
<keyword id="KW-1185">Reference proteome</keyword>
<keyword id="KW-0804">Transcription</keyword>
<keyword id="KW-0805">Transcription regulation</keyword>
<comment type="function">
    <text evidence="1">Component of the Mediator complex, a coactivator involved in the regulated transcription of nearly all RNA polymerase II-dependent genes. Mediator functions as a bridge to convey information from gene-specific regulatory proteins to the basal RNA polymerase II transcription machinery. Mediator is recruited to promoters by direct interactions with regulatory proteins and serves as a scaffold for the assembly of a functional preinitiation complex with RNA polymerase II and the general transcription factors (By similarity).</text>
</comment>
<comment type="subunit">
    <text evidence="1">Component of the Mediator complex.</text>
</comment>
<comment type="subcellular location">
    <subcellularLocation>
        <location evidence="4">Nucleus</location>
    </subcellularLocation>
</comment>
<comment type="alternative products">
    <event type="alternative splicing"/>
    <isoform>
        <id>A5WUL3-1</id>
        <name>1</name>
        <sequence type="displayed"/>
    </isoform>
    <isoform>
        <id>A5WUL3-2</id>
        <name>2</name>
        <sequence type="described" ref="VSP_028997 VSP_028998"/>
    </isoform>
</comment>
<comment type="similarity">
    <text evidence="4">Belongs to the Mediator complex subunit 22 family.</text>
</comment>
<organism>
    <name type="scientific">Danio rerio</name>
    <name type="common">Zebrafish</name>
    <name type="synonym">Brachydanio rerio</name>
    <dbReference type="NCBI Taxonomy" id="7955"/>
    <lineage>
        <taxon>Eukaryota</taxon>
        <taxon>Metazoa</taxon>
        <taxon>Chordata</taxon>
        <taxon>Craniata</taxon>
        <taxon>Vertebrata</taxon>
        <taxon>Euteleostomi</taxon>
        <taxon>Actinopterygii</taxon>
        <taxon>Neopterygii</taxon>
        <taxon>Teleostei</taxon>
        <taxon>Ostariophysi</taxon>
        <taxon>Cypriniformes</taxon>
        <taxon>Danionidae</taxon>
        <taxon>Danioninae</taxon>
        <taxon>Danio</taxon>
    </lineage>
</organism>
<reference key="1">
    <citation type="journal article" date="2013" name="Nature">
        <title>The zebrafish reference genome sequence and its relationship to the human genome.</title>
        <authorList>
            <person name="Howe K."/>
            <person name="Clark M.D."/>
            <person name="Torroja C.F."/>
            <person name="Torrance J."/>
            <person name="Berthelot C."/>
            <person name="Muffato M."/>
            <person name="Collins J.E."/>
            <person name="Humphray S."/>
            <person name="McLaren K."/>
            <person name="Matthews L."/>
            <person name="McLaren S."/>
            <person name="Sealy I."/>
            <person name="Caccamo M."/>
            <person name="Churcher C."/>
            <person name="Scott C."/>
            <person name="Barrett J.C."/>
            <person name="Koch R."/>
            <person name="Rauch G.J."/>
            <person name="White S."/>
            <person name="Chow W."/>
            <person name="Kilian B."/>
            <person name="Quintais L.T."/>
            <person name="Guerra-Assuncao J.A."/>
            <person name="Zhou Y."/>
            <person name="Gu Y."/>
            <person name="Yen J."/>
            <person name="Vogel J.H."/>
            <person name="Eyre T."/>
            <person name="Redmond S."/>
            <person name="Banerjee R."/>
            <person name="Chi J."/>
            <person name="Fu B."/>
            <person name="Langley E."/>
            <person name="Maguire S.F."/>
            <person name="Laird G.K."/>
            <person name="Lloyd D."/>
            <person name="Kenyon E."/>
            <person name="Donaldson S."/>
            <person name="Sehra H."/>
            <person name="Almeida-King J."/>
            <person name="Loveland J."/>
            <person name="Trevanion S."/>
            <person name="Jones M."/>
            <person name="Quail M."/>
            <person name="Willey D."/>
            <person name="Hunt A."/>
            <person name="Burton J."/>
            <person name="Sims S."/>
            <person name="McLay K."/>
            <person name="Plumb B."/>
            <person name="Davis J."/>
            <person name="Clee C."/>
            <person name="Oliver K."/>
            <person name="Clark R."/>
            <person name="Riddle C."/>
            <person name="Elliot D."/>
            <person name="Threadgold G."/>
            <person name="Harden G."/>
            <person name="Ware D."/>
            <person name="Begum S."/>
            <person name="Mortimore B."/>
            <person name="Kerry G."/>
            <person name="Heath P."/>
            <person name="Phillimore B."/>
            <person name="Tracey A."/>
            <person name="Corby N."/>
            <person name="Dunn M."/>
            <person name="Johnson C."/>
            <person name="Wood J."/>
            <person name="Clark S."/>
            <person name="Pelan S."/>
            <person name="Griffiths G."/>
            <person name="Smith M."/>
            <person name="Glithero R."/>
            <person name="Howden P."/>
            <person name="Barker N."/>
            <person name="Lloyd C."/>
            <person name="Stevens C."/>
            <person name="Harley J."/>
            <person name="Holt K."/>
            <person name="Panagiotidis G."/>
            <person name="Lovell J."/>
            <person name="Beasley H."/>
            <person name="Henderson C."/>
            <person name="Gordon D."/>
            <person name="Auger K."/>
            <person name="Wright D."/>
            <person name="Collins J."/>
            <person name="Raisen C."/>
            <person name="Dyer L."/>
            <person name="Leung K."/>
            <person name="Robertson L."/>
            <person name="Ambridge K."/>
            <person name="Leongamornlert D."/>
            <person name="McGuire S."/>
            <person name="Gilderthorp R."/>
            <person name="Griffiths C."/>
            <person name="Manthravadi D."/>
            <person name="Nichol S."/>
            <person name="Barker G."/>
            <person name="Whitehead S."/>
            <person name="Kay M."/>
            <person name="Brown J."/>
            <person name="Murnane C."/>
            <person name="Gray E."/>
            <person name="Humphries M."/>
            <person name="Sycamore N."/>
            <person name="Barker D."/>
            <person name="Saunders D."/>
            <person name="Wallis J."/>
            <person name="Babbage A."/>
            <person name="Hammond S."/>
            <person name="Mashreghi-Mohammadi M."/>
            <person name="Barr L."/>
            <person name="Martin S."/>
            <person name="Wray P."/>
            <person name="Ellington A."/>
            <person name="Matthews N."/>
            <person name="Ellwood M."/>
            <person name="Woodmansey R."/>
            <person name="Clark G."/>
            <person name="Cooper J."/>
            <person name="Tromans A."/>
            <person name="Grafham D."/>
            <person name="Skuce C."/>
            <person name="Pandian R."/>
            <person name="Andrews R."/>
            <person name="Harrison E."/>
            <person name="Kimberley A."/>
            <person name="Garnett J."/>
            <person name="Fosker N."/>
            <person name="Hall R."/>
            <person name="Garner P."/>
            <person name="Kelly D."/>
            <person name="Bird C."/>
            <person name="Palmer S."/>
            <person name="Gehring I."/>
            <person name="Berger A."/>
            <person name="Dooley C.M."/>
            <person name="Ersan-Urun Z."/>
            <person name="Eser C."/>
            <person name="Geiger H."/>
            <person name="Geisler M."/>
            <person name="Karotki L."/>
            <person name="Kirn A."/>
            <person name="Konantz J."/>
            <person name="Konantz M."/>
            <person name="Oberlander M."/>
            <person name="Rudolph-Geiger S."/>
            <person name="Teucke M."/>
            <person name="Lanz C."/>
            <person name="Raddatz G."/>
            <person name="Osoegawa K."/>
            <person name="Zhu B."/>
            <person name="Rapp A."/>
            <person name="Widaa S."/>
            <person name="Langford C."/>
            <person name="Yang F."/>
            <person name="Schuster S.C."/>
            <person name="Carter N.P."/>
            <person name="Harrow J."/>
            <person name="Ning Z."/>
            <person name="Herrero J."/>
            <person name="Searle S.M."/>
            <person name="Enright A."/>
            <person name="Geisler R."/>
            <person name="Plasterk R.H."/>
            <person name="Lee C."/>
            <person name="Westerfield M."/>
            <person name="de Jong P.J."/>
            <person name="Zon L.I."/>
            <person name="Postlethwait J.H."/>
            <person name="Nusslein-Volhard C."/>
            <person name="Hubbard T.J."/>
            <person name="Roest Crollius H."/>
            <person name="Rogers J."/>
            <person name="Stemple D.L."/>
        </authorList>
    </citation>
    <scope>NUCLEOTIDE SEQUENCE [LARGE SCALE GENOMIC DNA]</scope>
    <source>
        <strain>Tuebingen</strain>
    </source>
</reference>
<reference key="2">
    <citation type="submission" date="2004-06" db="EMBL/GenBank/DDBJ databases">
        <authorList>
            <consortium name="NIH - Zebrafish Gene Collection (ZGC) project"/>
        </authorList>
    </citation>
    <scope>NUCLEOTIDE SEQUENCE [LARGE SCALE MRNA] (ISOFORM 2)</scope>
    <source>
        <tissue>Embryo</tissue>
    </source>
</reference>
<evidence type="ECO:0000250" key="1"/>
<evidence type="ECO:0000256" key="2">
    <source>
        <dbReference type="SAM" id="MobiDB-lite"/>
    </source>
</evidence>
<evidence type="ECO:0000303" key="3">
    <source ref="2"/>
</evidence>
<evidence type="ECO:0000305" key="4"/>
<feature type="chain" id="PRO_0000308569" description="Mediator of RNA polymerase II transcription subunit 22">
    <location>
        <begin position="1"/>
        <end position="198"/>
    </location>
</feature>
<feature type="region of interest" description="Disordered" evidence="2">
    <location>
        <begin position="159"/>
        <end position="198"/>
    </location>
</feature>
<feature type="splice variant" id="VSP_028997" description="In isoform 2." evidence="3">
    <original>SCG</original>
    <variation>RYK</variation>
    <location>
        <begin position="138"/>
        <end position="140"/>
    </location>
</feature>
<feature type="splice variant" id="VSP_028998" description="In isoform 2." evidence="3">
    <location>
        <begin position="141"/>
        <end position="198"/>
    </location>
</feature>
<name>MED22_DANRE</name>
<dbReference type="EMBL" id="BX927184">
    <property type="protein sequence ID" value="CAN88486.1"/>
    <property type="molecule type" value="Genomic_DNA"/>
</dbReference>
<dbReference type="EMBL" id="CU019641">
    <property type="protein sequence ID" value="CAN88486.1"/>
    <property type="status" value="JOINED"/>
    <property type="molecule type" value="Genomic_DNA"/>
</dbReference>
<dbReference type="EMBL" id="CR382323">
    <property type="protein sequence ID" value="CAN88767.1"/>
    <property type="molecule type" value="Genomic_DNA"/>
</dbReference>
<dbReference type="EMBL" id="CR382323">
    <property type="protein sequence ID" value="CAN88768.1"/>
    <property type="molecule type" value="Genomic_DNA"/>
</dbReference>
<dbReference type="EMBL" id="BC071397">
    <property type="protein sequence ID" value="AAH71397.1"/>
    <property type="molecule type" value="mRNA"/>
</dbReference>
<dbReference type="RefSeq" id="NP_001002144.1">
    <molecule id="A5WUL3-2"/>
    <property type="nucleotide sequence ID" value="NM_001002144.1"/>
</dbReference>
<dbReference type="SMR" id="A5WUL3"/>
<dbReference type="FunCoup" id="A5WUL3">
    <property type="interactions" value="1503"/>
</dbReference>
<dbReference type="STRING" id="7955.ENSDARP00000113772"/>
<dbReference type="PaxDb" id="7955-ENSDARP00000111825"/>
<dbReference type="PeptideAtlas" id="A5WUL3"/>
<dbReference type="GeneID" id="415234"/>
<dbReference type="KEGG" id="dre:415234"/>
<dbReference type="AGR" id="ZFIN:ZDB-GENE-040625-156"/>
<dbReference type="CTD" id="6837"/>
<dbReference type="ZFIN" id="ZDB-GENE-040625-156">
    <property type="gene designation" value="med22"/>
</dbReference>
<dbReference type="eggNOG" id="KOG3304">
    <property type="taxonomic scope" value="Eukaryota"/>
</dbReference>
<dbReference type="HOGENOM" id="CLU_117242_0_0_1"/>
<dbReference type="InParanoid" id="A5WUL3"/>
<dbReference type="OrthoDB" id="203279at2759"/>
<dbReference type="PhylomeDB" id="A5WUL3"/>
<dbReference type="TreeFam" id="TF323390"/>
<dbReference type="PRO" id="PR:A5WUL3"/>
<dbReference type="Proteomes" id="UP000000437">
    <property type="component" value="Chromosome 5"/>
</dbReference>
<dbReference type="Bgee" id="ENSDARG00000014148">
    <property type="expression patterns" value="Expressed in swim bladder and 27 other cell types or tissues"/>
</dbReference>
<dbReference type="ExpressionAtlas" id="A5WUL3">
    <property type="expression patterns" value="baseline"/>
</dbReference>
<dbReference type="GO" id="GO:0016592">
    <property type="term" value="C:mediator complex"/>
    <property type="evidence" value="ECO:0000318"/>
    <property type="project" value="GO_Central"/>
</dbReference>
<dbReference type="GO" id="GO:0003712">
    <property type="term" value="F:transcription coregulator activity"/>
    <property type="evidence" value="ECO:0007669"/>
    <property type="project" value="InterPro"/>
</dbReference>
<dbReference type="GO" id="GO:0006357">
    <property type="term" value="P:regulation of transcription by RNA polymerase II"/>
    <property type="evidence" value="ECO:0007669"/>
    <property type="project" value="InterPro"/>
</dbReference>
<dbReference type="InterPro" id="IPR009332">
    <property type="entry name" value="Med22"/>
</dbReference>
<dbReference type="PANTHER" id="PTHR12434">
    <property type="entry name" value="MEDIATOR OF RNA POLYMERASE II TRANSCRIPTION SUBUNIT 22"/>
    <property type="match status" value="1"/>
</dbReference>
<dbReference type="PANTHER" id="PTHR12434:SF6">
    <property type="entry name" value="MEDIATOR OF RNA POLYMERASE II TRANSCRIPTION SUBUNIT 22"/>
    <property type="match status" value="1"/>
</dbReference>
<dbReference type="Pfam" id="PF06179">
    <property type="entry name" value="Med22"/>
    <property type="match status" value="1"/>
</dbReference>